<proteinExistence type="inferred from homology"/>
<name>RTCA_SACI7</name>
<evidence type="ECO:0000255" key="1">
    <source>
        <dbReference type="HAMAP-Rule" id="MF_00200"/>
    </source>
</evidence>
<accession>C3N969</accession>
<sequence length="337" mass="36685">MIEIDGSFGEGGGQILRTSLTLSVITGKPFRIFNIRANRPNPGLQRQHLWAVKAMKMISNAETKGDEVGSKELIFVPHEIKGNTNIDIDVGTAGSVTLIIQTVLPAIINKNVRIRIKGGTDVPKSPTIDYIRLVYLEILRKIGIEAKLNLIKRGHYPEGGGEVIIENVNGNPSAFSLLELGKLTIIKGISHVSSLPAHIAERQMNSAREILSKLGVPIEIETDVRQGEVSKGSGIALAAIGEKSIIGADSLGERGKRAEIVGEEAARILINNLNTKASVDIHMSDMLMIFASLYGGEYIGAELTSHAYTNMEIIKKFLDIKIDVSGKRPFRFKAKIF</sequence>
<organism>
    <name type="scientific">Saccharolobus islandicus (strain Y.G.57.14 / Yellowstone #1)</name>
    <name type="common">Sulfolobus islandicus</name>
    <dbReference type="NCBI Taxonomy" id="439386"/>
    <lineage>
        <taxon>Archaea</taxon>
        <taxon>Thermoproteota</taxon>
        <taxon>Thermoprotei</taxon>
        <taxon>Sulfolobales</taxon>
        <taxon>Sulfolobaceae</taxon>
        <taxon>Saccharolobus</taxon>
    </lineage>
</organism>
<gene>
    <name evidence="1" type="primary">rtcA</name>
    <name type="ordered locus">YG5714_0238</name>
</gene>
<feature type="chain" id="PRO_1000204097" description="RNA 3'-terminal phosphate cyclase">
    <location>
        <begin position="1"/>
        <end position="337"/>
    </location>
</feature>
<feature type="active site" description="Tele-AMP-histidine intermediate" evidence="1">
    <location>
        <position position="306"/>
    </location>
</feature>
<feature type="binding site" evidence="1">
    <location>
        <position position="101"/>
    </location>
    <ligand>
        <name>ATP</name>
        <dbReference type="ChEBI" id="CHEBI:30616"/>
    </ligand>
</feature>
<feature type="binding site" evidence="1">
    <location>
        <begin position="282"/>
        <end position="285"/>
    </location>
    <ligand>
        <name>ATP</name>
        <dbReference type="ChEBI" id="CHEBI:30616"/>
    </ligand>
</feature>
<protein>
    <recommendedName>
        <fullName evidence="1">RNA 3'-terminal phosphate cyclase</fullName>
        <shortName evidence="1">RNA cyclase</shortName>
        <shortName evidence="1">RNA-3'-phosphate cyclase</shortName>
        <ecNumber evidence="1">6.5.1.4</ecNumber>
    </recommendedName>
</protein>
<dbReference type="EC" id="6.5.1.4" evidence="1"/>
<dbReference type="EMBL" id="CP001403">
    <property type="protein sequence ID" value="ACP44531.1"/>
    <property type="molecule type" value="Genomic_DNA"/>
</dbReference>
<dbReference type="RefSeq" id="WP_012712889.1">
    <property type="nucleotide sequence ID" value="NC_012622.1"/>
</dbReference>
<dbReference type="SMR" id="C3N969"/>
<dbReference type="GeneID" id="7806388"/>
<dbReference type="KEGG" id="siy:YG5714_0238"/>
<dbReference type="HOGENOM" id="CLU_027882_0_0_2"/>
<dbReference type="Proteomes" id="UP000002308">
    <property type="component" value="Chromosome"/>
</dbReference>
<dbReference type="GO" id="GO:0005737">
    <property type="term" value="C:cytoplasm"/>
    <property type="evidence" value="ECO:0007669"/>
    <property type="project" value="UniProtKB-SubCell"/>
</dbReference>
<dbReference type="GO" id="GO:0005524">
    <property type="term" value="F:ATP binding"/>
    <property type="evidence" value="ECO:0007669"/>
    <property type="project" value="UniProtKB-KW"/>
</dbReference>
<dbReference type="GO" id="GO:0003963">
    <property type="term" value="F:RNA-3'-phosphate cyclase activity"/>
    <property type="evidence" value="ECO:0007669"/>
    <property type="project" value="UniProtKB-UniRule"/>
</dbReference>
<dbReference type="GO" id="GO:0006396">
    <property type="term" value="P:RNA processing"/>
    <property type="evidence" value="ECO:0007669"/>
    <property type="project" value="InterPro"/>
</dbReference>
<dbReference type="CDD" id="cd00874">
    <property type="entry name" value="RNA_Cyclase_Class_II"/>
    <property type="match status" value="1"/>
</dbReference>
<dbReference type="FunFam" id="3.30.360.20:FF:000002">
    <property type="entry name" value="RNA terminal phosphate cyclase-like 1"/>
    <property type="match status" value="1"/>
</dbReference>
<dbReference type="Gene3D" id="3.65.10.20">
    <property type="entry name" value="RNA 3'-terminal phosphate cyclase domain"/>
    <property type="match status" value="1"/>
</dbReference>
<dbReference type="Gene3D" id="3.30.360.20">
    <property type="entry name" value="RNA 3'-terminal phosphate cyclase, insert domain"/>
    <property type="match status" value="1"/>
</dbReference>
<dbReference type="HAMAP" id="MF_00200">
    <property type="entry name" value="RTC"/>
    <property type="match status" value="1"/>
</dbReference>
<dbReference type="InterPro" id="IPR013791">
    <property type="entry name" value="RNA3'-term_phos_cycl_insert"/>
</dbReference>
<dbReference type="InterPro" id="IPR023797">
    <property type="entry name" value="RNA3'_phos_cyclase_dom"/>
</dbReference>
<dbReference type="InterPro" id="IPR037136">
    <property type="entry name" value="RNA3'_phos_cyclase_dom_sf"/>
</dbReference>
<dbReference type="InterPro" id="IPR000228">
    <property type="entry name" value="RNA3'_term_phos_cyc"/>
</dbReference>
<dbReference type="InterPro" id="IPR017770">
    <property type="entry name" value="RNA3'_term_phos_cyc_type_1"/>
</dbReference>
<dbReference type="InterPro" id="IPR020719">
    <property type="entry name" value="RNA3'_term_phos_cycl-like_CS"/>
</dbReference>
<dbReference type="InterPro" id="IPR013792">
    <property type="entry name" value="RNA3'P_cycl/enolpyr_Trfase_a/b"/>
</dbReference>
<dbReference type="InterPro" id="IPR036553">
    <property type="entry name" value="RPTC_insert"/>
</dbReference>
<dbReference type="NCBIfam" id="TIGR03399">
    <property type="entry name" value="RNA_3prim_cycl"/>
    <property type="match status" value="1"/>
</dbReference>
<dbReference type="PANTHER" id="PTHR11096">
    <property type="entry name" value="RNA 3' TERMINAL PHOSPHATE CYCLASE"/>
    <property type="match status" value="1"/>
</dbReference>
<dbReference type="PANTHER" id="PTHR11096:SF0">
    <property type="entry name" value="RNA 3'-TERMINAL PHOSPHATE CYCLASE"/>
    <property type="match status" value="1"/>
</dbReference>
<dbReference type="Pfam" id="PF01137">
    <property type="entry name" value="RTC"/>
    <property type="match status" value="1"/>
</dbReference>
<dbReference type="Pfam" id="PF05189">
    <property type="entry name" value="RTC_insert"/>
    <property type="match status" value="1"/>
</dbReference>
<dbReference type="PIRSF" id="PIRSF005378">
    <property type="entry name" value="RNA3'_term_phos_cycl_euk"/>
    <property type="match status" value="1"/>
</dbReference>
<dbReference type="SUPFAM" id="SSF55205">
    <property type="entry name" value="EPT/RTPC-like"/>
    <property type="match status" value="1"/>
</dbReference>
<dbReference type="PROSITE" id="PS01287">
    <property type="entry name" value="RTC"/>
    <property type="match status" value="1"/>
</dbReference>
<keyword id="KW-0067">ATP-binding</keyword>
<keyword id="KW-0963">Cytoplasm</keyword>
<keyword id="KW-0436">Ligase</keyword>
<keyword id="KW-0547">Nucleotide-binding</keyword>
<comment type="function">
    <text evidence="1">Catalyzes the conversion of 3'-phosphate to a 2',3'-cyclic phosphodiester at the end of RNA. The mechanism of action of the enzyme occurs in 3 steps: (A) adenylation of the enzyme by ATP; (B) transfer of adenylate to an RNA-N3'P to produce RNA-N3'PP5'A; (C) and attack of the adjacent 2'-hydroxyl on the 3'-phosphorus in the diester linkage to produce the cyclic end product. The biological role of this enzyme is unknown but it is likely to function in some aspects of cellular RNA processing.</text>
</comment>
<comment type="catalytic activity">
    <reaction evidence="1">
        <text>a 3'-end 3'-phospho-ribonucleotide-RNA + ATP = a 3'-end 2',3'-cyclophospho-ribonucleotide-RNA + AMP + diphosphate</text>
        <dbReference type="Rhea" id="RHEA:23976"/>
        <dbReference type="Rhea" id="RHEA-COMP:10463"/>
        <dbReference type="Rhea" id="RHEA-COMP:10464"/>
        <dbReference type="ChEBI" id="CHEBI:30616"/>
        <dbReference type="ChEBI" id="CHEBI:33019"/>
        <dbReference type="ChEBI" id="CHEBI:83062"/>
        <dbReference type="ChEBI" id="CHEBI:83064"/>
        <dbReference type="ChEBI" id="CHEBI:456215"/>
        <dbReference type="EC" id="6.5.1.4"/>
    </reaction>
</comment>
<comment type="subcellular location">
    <subcellularLocation>
        <location evidence="1">Cytoplasm</location>
    </subcellularLocation>
</comment>
<comment type="similarity">
    <text evidence="1">Belongs to the RNA 3'-terminal cyclase family. Type 1 subfamily.</text>
</comment>
<reference key="1">
    <citation type="journal article" date="2009" name="Proc. Natl. Acad. Sci. U.S.A.">
        <title>Biogeography of the Sulfolobus islandicus pan-genome.</title>
        <authorList>
            <person name="Reno M.L."/>
            <person name="Held N.L."/>
            <person name="Fields C.J."/>
            <person name="Burke P.V."/>
            <person name="Whitaker R.J."/>
        </authorList>
    </citation>
    <scope>NUCLEOTIDE SEQUENCE [LARGE SCALE GENOMIC DNA]</scope>
    <source>
        <strain>Y.G.57.14 / Yellowstone #1</strain>
    </source>
</reference>